<proteinExistence type="evidence at protein level"/>
<gene>
    <name evidence="15" type="primary">CLEC4D</name>
    <name evidence="10" type="synonym">CLECSF8</name>
    <name evidence="11 13" type="synonym">MCL</name>
</gene>
<name>CLC4D_HUMAN</name>
<accession>Q8WXI8</accession>
<accession>Q8N5J5</accession>
<protein>
    <recommendedName>
        <fullName>C-type lectin domain family 4 member D</fullName>
    </recommendedName>
    <alternativeName>
        <fullName>C-type lectin superfamily member 8</fullName>
    </alternativeName>
    <alternativeName>
        <fullName>C-type lectin-like receptor 6</fullName>
        <shortName>CLEC-6</shortName>
    </alternativeName>
    <alternativeName>
        <fullName evidence="12">Dendritic cell-associated C-type lectin 3</fullName>
        <shortName evidence="12">DC-associated C-type lectin 3</shortName>
        <shortName evidence="12">Dectin-3</shortName>
    </alternativeName>
    <cdAntigenName>CD368</cdAntigenName>
</protein>
<evidence type="ECO:0000250" key="1">
    <source>
        <dbReference type="UniProtKB" id="Q69FH1"/>
    </source>
</evidence>
<evidence type="ECO:0000255" key="2"/>
<evidence type="ECO:0000255" key="3">
    <source>
        <dbReference type="PROSITE-ProRule" id="PRU00040"/>
    </source>
</evidence>
<evidence type="ECO:0000269" key="4">
    <source>
    </source>
</evidence>
<evidence type="ECO:0000269" key="5">
    <source>
    </source>
</evidence>
<evidence type="ECO:0000269" key="6">
    <source>
    </source>
</evidence>
<evidence type="ECO:0000269" key="7">
    <source>
    </source>
</evidence>
<evidence type="ECO:0000269" key="8">
    <source ref="3"/>
</evidence>
<evidence type="ECO:0000269" key="9">
    <source ref="4"/>
</evidence>
<evidence type="ECO:0000303" key="10">
    <source>
    </source>
</evidence>
<evidence type="ECO:0000303" key="11">
    <source>
    </source>
</evidence>
<evidence type="ECO:0000303" key="12">
    <source>
    </source>
</evidence>
<evidence type="ECO:0000303" key="13">
    <source>
    </source>
</evidence>
<evidence type="ECO:0000305" key="14"/>
<evidence type="ECO:0000312" key="15">
    <source>
        <dbReference type="HGNC" id="HGNC:14554"/>
    </source>
</evidence>
<evidence type="ECO:0007829" key="16">
    <source>
        <dbReference type="PDB" id="2LS8"/>
    </source>
</evidence>
<evidence type="ECO:0007829" key="17">
    <source>
        <dbReference type="PDB" id="3WHD"/>
    </source>
</evidence>
<reference key="1">
    <citation type="journal article" date="2004" name="Eur. J. Immunol.">
        <title>The human C-type lectin CLECSF8 is a novel monocyte/macrophage endocytic receptor.</title>
        <authorList>
            <person name="Arce I."/>
            <person name="Martinez-Munoz L."/>
            <person name="Roda-Navarro P."/>
            <person name="Fernandez-Ruiz E."/>
        </authorList>
    </citation>
    <scope>NUCLEOTIDE SEQUENCE [MRNA]</scope>
    <scope>FUNCTION</scope>
    <scope>TISSUE SPECIFICITY</scope>
    <scope>INDUCTION</scope>
</reference>
<reference key="2">
    <citation type="journal article" date="2004" name="Immunogenetics">
        <title>Identification of lectin-like receptors expressed by antigen presenting cells and neutrophils and their mapping to a novel gene complex.</title>
        <authorList>
            <person name="Flornes L.M."/>
            <person name="Bryceson Y.T."/>
            <person name="Spurkland A."/>
            <person name="Lorentzen J.C."/>
            <person name="Dissen E."/>
            <person name="Fossum S."/>
        </authorList>
    </citation>
    <scope>NUCLEOTIDE SEQUENCE [MRNA]</scope>
    <source>
        <tissue>Macrophage</tissue>
    </source>
</reference>
<reference key="3">
    <citation type="submission" date="2001-07" db="EMBL/GenBank/DDBJ databases">
        <title>C-type lectin-like receptor.</title>
        <authorList>
            <person name="Colonna M."/>
        </authorList>
    </citation>
    <scope>NUCLEOTIDE SEQUENCE [MRNA]</scope>
    <scope>VARIANT GLY-32</scope>
</reference>
<reference key="4">
    <citation type="submission" date="2002-05" db="EMBL/GenBank/DDBJ databases">
        <authorList>
            <person name="Ma J."/>
            <person name="Liew C.-C."/>
        </authorList>
    </citation>
    <scope>NUCLEOTIDE SEQUENCE [MRNA]</scope>
    <scope>VARIANT GLY-32</scope>
    <source>
        <tissue>Peripheral blood</tissue>
    </source>
</reference>
<reference key="5">
    <citation type="journal article" date="2004" name="Genome Res.">
        <title>The status, quality, and expansion of the NIH full-length cDNA project: the Mammalian Gene Collection (MGC).</title>
        <authorList>
            <consortium name="The MGC Project Team"/>
        </authorList>
    </citation>
    <scope>NUCLEOTIDE SEQUENCE [LARGE SCALE MRNA]</scope>
    <source>
        <tissue>Blood</tissue>
    </source>
</reference>
<reference key="6">
    <citation type="journal article" date="2013" name="Immunity">
        <title>C-type lectin MCL is an FcRgamma-coupled receptor that mediates the adjuvanticity of mycobacterial cord factor.</title>
        <authorList>
            <person name="Miyake Y."/>
            <person name="Toyonaga K."/>
            <person name="Mori D."/>
            <person name="Kakuta S."/>
            <person name="Hoshino Y."/>
            <person name="Oyamada A."/>
            <person name="Yamada H."/>
            <person name="Ono K."/>
            <person name="Suyama M."/>
            <person name="Iwakura Y."/>
            <person name="Yoshikai Y."/>
            <person name="Yamasaki S."/>
        </authorList>
    </citation>
    <scope>FUNCTION</scope>
</reference>
<reference key="7">
    <citation type="journal article" date="2013" name="Immunity">
        <title>C-type lectin receptors Dectin-3 and Dectin-2 form a heterodimeric pattern-recognition receptor for host defense against fungal infection.</title>
        <authorList>
            <person name="Zhu L.L."/>
            <person name="Zhao X.Q."/>
            <person name="Jiang C."/>
            <person name="You Y."/>
            <person name="Chen X.P."/>
            <person name="Jiang Y.Y."/>
            <person name="Jia X.M."/>
            <person name="Lin X."/>
        </authorList>
    </citation>
    <scope>FUNCTION</scope>
    <scope>SUBCELLULAR LOCATION</scope>
    <scope>INTERACTION WITH CLEC6A</scope>
</reference>
<reference key="8">
    <citation type="journal article" date="2013" name="Proc. Natl. Acad. Sci. U.S.A.">
        <title>Structural analysis for glycolipid recognition by the C-type lectins Mincle and MCL.</title>
        <authorList>
            <person name="Furukawa A."/>
            <person name="Kamishikiryo J."/>
            <person name="Mori D."/>
            <person name="Toyonaga K."/>
            <person name="Okabe Y."/>
            <person name="Toji A."/>
            <person name="Kanda R."/>
            <person name="Miyake Y."/>
            <person name="Ose T."/>
            <person name="Yamasaki S."/>
            <person name="Maenaka K."/>
        </authorList>
    </citation>
    <scope>X-RAY CRYSTALLOGRAPHY (2.29 ANGSTROMS) OF 61-215 IN COMPLEX WITH CALCIUM</scope>
    <scope>MUTAGENESIS OF GLU-173 AND ASP-175</scope>
</reference>
<feature type="chain" id="PRO_0000046616" description="C-type lectin domain family 4 member D">
    <location>
        <begin position="1"/>
        <end position="215"/>
    </location>
</feature>
<feature type="topological domain" description="Cytoplasmic" evidence="2">
    <location>
        <begin position="1"/>
        <end position="17"/>
    </location>
</feature>
<feature type="transmembrane region" description="Helical; Signal-anchor for type II membrane protein" evidence="2">
    <location>
        <begin position="18"/>
        <end position="38"/>
    </location>
</feature>
<feature type="topological domain" description="Extracellular" evidence="2">
    <location>
        <begin position="39"/>
        <end position="215"/>
    </location>
</feature>
<feature type="domain" description="C-type lectin" evidence="3">
    <location>
        <begin position="91"/>
        <end position="208"/>
    </location>
</feature>
<feature type="binding site" evidence="7">
    <location>
        <position position="173"/>
    </location>
    <ligand>
        <name>Ca(2+)</name>
        <dbReference type="ChEBI" id="CHEBI:29108"/>
    </ligand>
</feature>
<feature type="binding site" evidence="7">
    <location>
        <position position="175"/>
    </location>
    <ligand>
        <name>Ca(2+)</name>
        <dbReference type="ChEBI" id="CHEBI:29108"/>
    </ligand>
</feature>
<feature type="binding site" evidence="7">
    <location>
        <position position="195"/>
    </location>
    <ligand>
        <name>Ca(2+)</name>
        <dbReference type="ChEBI" id="CHEBI:29108"/>
    </ligand>
</feature>
<feature type="binding site" evidence="7">
    <location>
        <position position="196"/>
    </location>
    <ligand>
        <name>Ca(2+)</name>
        <dbReference type="ChEBI" id="CHEBI:29108"/>
    </ligand>
</feature>
<feature type="glycosylation site" description="N-linked (GlcNAc...) asparagine" evidence="2">
    <location>
        <position position="45"/>
    </location>
</feature>
<feature type="glycosylation site" description="N-linked (GlcNAc...) asparagine" evidence="2">
    <location>
        <position position="102"/>
    </location>
</feature>
<feature type="glycosylation site" description="N-linked (GlcNAc...) asparagine" evidence="2">
    <location>
        <position position="111"/>
    </location>
</feature>
<feature type="disulfide bond" evidence="3">
    <location>
        <begin position="84"/>
        <end position="95"/>
    </location>
</feature>
<feature type="disulfide bond" evidence="3">
    <location>
        <begin position="112"/>
        <end position="207"/>
    </location>
</feature>
<feature type="disulfide bond" evidence="3">
    <location>
        <begin position="182"/>
        <end position="199"/>
    </location>
</feature>
<feature type="sequence variant" id="VAR_021261" description="In dbSNP:rs4304840." evidence="8 9">
    <original>S</original>
    <variation>G</variation>
    <location>
        <position position="32"/>
    </location>
</feature>
<feature type="mutagenesis site" description="No effect on already low affinity binding to trehalose-6,6'-dimycolate." evidence="7">
    <original>E</original>
    <variation>Q</variation>
    <location>
        <position position="173"/>
    </location>
</feature>
<feature type="mutagenesis site" description="No effect on already low affinity binding to trehalose-6,6'-dimycolate." evidence="7">
    <original>D</original>
    <variation>N</variation>
    <location>
        <position position="175"/>
    </location>
</feature>
<feature type="strand" evidence="17">
    <location>
        <begin position="63"/>
        <end position="67"/>
    </location>
</feature>
<feature type="strand" evidence="17">
    <location>
        <begin position="81"/>
        <end position="85"/>
    </location>
</feature>
<feature type="strand" evidence="17">
    <location>
        <begin position="88"/>
        <end position="91"/>
    </location>
</feature>
<feature type="strand" evidence="17">
    <location>
        <begin position="94"/>
        <end position="103"/>
    </location>
</feature>
<feature type="helix" evidence="17">
    <location>
        <begin position="105"/>
        <end position="113"/>
    </location>
</feature>
<feature type="turn" evidence="17">
    <location>
        <begin position="114"/>
        <end position="116"/>
    </location>
</feature>
<feature type="strand" evidence="16">
    <location>
        <begin position="118"/>
        <end position="120"/>
    </location>
</feature>
<feature type="helix" evidence="17">
    <location>
        <begin position="125"/>
        <end position="132"/>
    </location>
</feature>
<feature type="strand" evidence="17">
    <location>
        <begin position="141"/>
        <end position="147"/>
    </location>
</feature>
<feature type="strand" evidence="17">
    <location>
        <begin position="150"/>
        <end position="152"/>
    </location>
</feature>
<feature type="strand" evidence="17">
    <location>
        <begin position="181"/>
        <end position="187"/>
    </location>
</feature>
<feature type="strand" evidence="17">
    <location>
        <begin position="189"/>
        <end position="198"/>
    </location>
</feature>
<feature type="strand" evidence="17">
    <location>
        <begin position="203"/>
        <end position="210"/>
    </location>
</feature>
<feature type="strand" evidence="17">
    <location>
        <begin position="212"/>
        <end position="214"/>
    </location>
</feature>
<keyword id="KW-0002">3D-structure</keyword>
<keyword id="KW-1064">Adaptive immunity</keyword>
<keyword id="KW-0106">Calcium</keyword>
<keyword id="KW-1003">Cell membrane</keyword>
<keyword id="KW-1015">Disulfide bond</keyword>
<keyword id="KW-0325">Glycoprotein</keyword>
<keyword id="KW-0391">Immunity</keyword>
<keyword id="KW-0399">Innate immunity</keyword>
<keyword id="KW-0430">Lectin</keyword>
<keyword id="KW-0472">Membrane</keyword>
<keyword id="KW-0479">Metal-binding</keyword>
<keyword id="KW-1267">Proteomics identification</keyword>
<keyword id="KW-1185">Reference proteome</keyword>
<keyword id="KW-0735">Signal-anchor</keyword>
<keyword id="KW-0812">Transmembrane</keyword>
<keyword id="KW-1133">Transmembrane helix</keyword>
<organism>
    <name type="scientific">Homo sapiens</name>
    <name type="common">Human</name>
    <dbReference type="NCBI Taxonomy" id="9606"/>
    <lineage>
        <taxon>Eukaryota</taxon>
        <taxon>Metazoa</taxon>
        <taxon>Chordata</taxon>
        <taxon>Craniata</taxon>
        <taxon>Vertebrata</taxon>
        <taxon>Euteleostomi</taxon>
        <taxon>Mammalia</taxon>
        <taxon>Eutheria</taxon>
        <taxon>Euarchontoglires</taxon>
        <taxon>Primates</taxon>
        <taxon>Haplorrhini</taxon>
        <taxon>Catarrhini</taxon>
        <taxon>Hominidae</taxon>
        <taxon>Homo</taxon>
    </lineage>
</organism>
<dbReference type="EMBL" id="AY297446">
    <property type="protein sequence ID" value="AAQ63173.1"/>
    <property type="molecule type" value="mRNA"/>
</dbReference>
<dbReference type="EMBL" id="AY486482">
    <property type="protein sequence ID" value="AAS59161.1"/>
    <property type="molecule type" value="mRNA"/>
</dbReference>
<dbReference type="EMBL" id="AY486483">
    <property type="protein sequence ID" value="AAS59162.1"/>
    <property type="molecule type" value="mRNA"/>
</dbReference>
<dbReference type="EMBL" id="AF411850">
    <property type="protein sequence ID" value="AAL37713.1"/>
    <property type="molecule type" value="mRNA"/>
</dbReference>
<dbReference type="EMBL" id="AY115592">
    <property type="protein sequence ID" value="AAM75389.1"/>
    <property type="molecule type" value="mRNA"/>
</dbReference>
<dbReference type="EMBL" id="BC032313">
    <property type="protein sequence ID" value="AAH32313.1"/>
    <property type="molecule type" value="mRNA"/>
</dbReference>
<dbReference type="CCDS" id="CCDS8593.1"/>
<dbReference type="RefSeq" id="NP_525126.2">
    <property type="nucleotide sequence ID" value="NM_080387.4"/>
</dbReference>
<dbReference type="RefSeq" id="XP_011518934.1">
    <property type="nucleotide sequence ID" value="XM_011520632.3"/>
</dbReference>
<dbReference type="RefSeq" id="XP_054227901.1">
    <property type="nucleotide sequence ID" value="XM_054371926.1"/>
</dbReference>
<dbReference type="PDB" id="2LS8">
    <property type="method" value="NMR"/>
    <property type="chains" value="A=84-215"/>
</dbReference>
<dbReference type="PDB" id="3WHD">
    <property type="method" value="X-ray"/>
    <property type="resolution" value="2.29 A"/>
    <property type="chains" value="A/C=61-215"/>
</dbReference>
<dbReference type="PDBsum" id="2LS8"/>
<dbReference type="PDBsum" id="3WHD"/>
<dbReference type="BMRB" id="Q8WXI8"/>
<dbReference type="SMR" id="Q8WXI8"/>
<dbReference type="BioGRID" id="130719">
    <property type="interactions" value="261"/>
</dbReference>
<dbReference type="FunCoup" id="Q8WXI8">
    <property type="interactions" value="269"/>
</dbReference>
<dbReference type="IntAct" id="Q8WXI8">
    <property type="interactions" value="4"/>
</dbReference>
<dbReference type="STRING" id="9606.ENSP00000299665"/>
<dbReference type="UniLectin" id="Q8WXI8"/>
<dbReference type="GlyCosmos" id="Q8WXI8">
    <property type="glycosylation" value="3 sites, No reported glycans"/>
</dbReference>
<dbReference type="GlyGen" id="Q8WXI8">
    <property type="glycosylation" value="3 sites"/>
</dbReference>
<dbReference type="iPTMnet" id="Q8WXI8"/>
<dbReference type="PhosphoSitePlus" id="Q8WXI8"/>
<dbReference type="BioMuta" id="CLEC4D"/>
<dbReference type="DMDM" id="73916933"/>
<dbReference type="MassIVE" id="Q8WXI8"/>
<dbReference type="PaxDb" id="9606-ENSP00000299665"/>
<dbReference type="PeptideAtlas" id="Q8WXI8"/>
<dbReference type="ABCD" id="Q8WXI8">
    <property type="antibodies" value="1 sequenced antibody"/>
</dbReference>
<dbReference type="Antibodypedia" id="1467">
    <property type="antibodies" value="288 antibodies from 30 providers"/>
</dbReference>
<dbReference type="DNASU" id="338339"/>
<dbReference type="Ensembl" id="ENST00000299665.3">
    <property type="protein sequence ID" value="ENSP00000299665.2"/>
    <property type="gene ID" value="ENSG00000166527.8"/>
</dbReference>
<dbReference type="GeneID" id="338339"/>
<dbReference type="KEGG" id="hsa:338339"/>
<dbReference type="MANE-Select" id="ENST00000299665.3">
    <property type="protein sequence ID" value="ENSP00000299665.2"/>
    <property type="RefSeq nucleotide sequence ID" value="NM_080387.5"/>
    <property type="RefSeq protein sequence ID" value="NP_525126.2"/>
</dbReference>
<dbReference type="UCSC" id="uc001qun.4">
    <property type="organism name" value="human"/>
</dbReference>
<dbReference type="AGR" id="HGNC:14554"/>
<dbReference type="CTD" id="338339"/>
<dbReference type="DisGeNET" id="338339"/>
<dbReference type="GeneCards" id="CLEC4D"/>
<dbReference type="HGNC" id="HGNC:14554">
    <property type="gene designation" value="CLEC4D"/>
</dbReference>
<dbReference type="HPA" id="ENSG00000166527">
    <property type="expression patterns" value="Tissue enriched (bone)"/>
</dbReference>
<dbReference type="MIM" id="609964">
    <property type="type" value="gene"/>
</dbReference>
<dbReference type="neXtProt" id="NX_Q8WXI8"/>
<dbReference type="OpenTargets" id="ENSG00000166527"/>
<dbReference type="PharmGKB" id="PA134916109"/>
<dbReference type="VEuPathDB" id="HostDB:ENSG00000166527"/>
<dbReference type="eggNOG" id="KOG4297">
    <property type="taxonomic scope" value="Eukaryota"/>
</dbReference>
<dbReference type="GeneTree" id="ENSGT00940000162400"/>
<dbReference type="HOGENOM" id="CLU_049894_7_5_1"/>
<dbReference type="InParanoid" id="Q8WXI8"/>
<dbReference type="OMA" id="QWIPWVI"/>
<dbReference type="OrthoDB" id="6133475at2759"/>
<dbReference type="PAN-GO" id="Q8WXI8">
    <property type="GO annotations" value="3 GO annotations based on evolutionary models"/>
</dbReference>
<dbReference type="PhylomeDB" id="Q8WXI8"/>
<dbReference type="TreeFam" id="TF333341"/>
<dbReference type="PathwayCommons" id="Q8WXI8"/>
<dbReference type="Reactome" id="R-HSA-5621480">
    <property type="pathway name" value="Dectin-2 family"/>
</dbReference>
<dbReference type="Reactome" id="R-HSA-6798695">
    <property type="pathway name" value="Neutrophil degranulation"/>
</dbReference>
<dbReference type="SignaLink" id="Q8WXI8"/>
<dbReference type="BioGRID-ORCS" id="338339">
    <property type="hits" value="11 hits in 1149 CRISPR screens"/>
</dbReference>
<dbReference type="EvolutionaryTrace" id="Q8WXI8"/>
<dbReference type="GenomeRNAi" id="338339"/>
<dbReference type="Pharos" id="Q8WXI8">
    <property type="development level" value="Tbio"/>
</dbReference>
<dbReference type="PRO" id="PR:Q8WXI8"/>
<dbReference type="Proteomes" id="UP000005640">
    <property type="component" value="Chromosome 12"/>
</dbReference>
<dbReference type="RNAct" id="Q8WXI8">
    <property type="molecule type" value="protein"/>
</dbReference>
<dbReference type="Bgee" id="ENSG00000166527">
    <property type="expression patterns" value="Expressed in bone marrow and 93 other cell types or tissues"/>
</dbReference>
<dbReference type="ExpressionAtlas" id="Q8WXI8">
    <property type="expression patterns" value="baseline and differential"/>
</dbReference>
<dbReference type="GO" id="GO:0009897">
    <property type="term" value="C:external side of plasma membrane"/>
    <property type="evidence" value="ECO:0000318"/>
    <property type="project" value="GO_Central"/>
</dbReference>
<dbReference type="GO" id="GO:0101003">
    <property type="term" value="C:ficolin-1-rich granule membrane"/>
    <property type="evidence" value="ECO:0000304"/>
    <property type="project" value="Reactome"/>
</dbReference>
<dbReference type="GO" id="GO:0005886">
    <property type="term" value="C:plasma membrane"/>
    <property type="evidence" value="ECO:0000314"/>
    <property type="project" value="UniProtKB"/>
</dbReference>
<dbReference type="GO" id="GO:0035579">
    <property type="term" value="C:specific granule membrane"/>
    <property type="evidence" value="ECO:0000304"/>
    <property type="project" value="Reactome"/>
</dbReference>
<dbReference type="GO" id="GO:0070821">
    <property type="term" value="C:tertiary granule membrane"/>
    <property type="evidence" value="ECO:0000304"/>
    <property type="project" value="Reactome"/>
</dbReference>
<dbReference type="GO" id="GO:0030246">
    <property type="term" value="F:carbohydrate binding"/>
    <property type="evidence" value="ECO:0000318"/>
    <property type="project" value="GO_Central"/>
</dbReference>
<dbReference type="GO" id="GO:0005537">
    <property type="term" value="F:D-mannose binding"/>
    <property type="evidence" value="ECO:0000314"/>
    <property type="project" value="UniProtKB"/>
</dbReference>
<dbReference type="GO" id="GO:0034987">
    <property type="term" value="F:immunoglobulin receptor binding"/>
    <property type="evidence" value="ECO:0007669"/>
    <property type="project" value="Ensembl"/>
</dbReference>
<dbReference type="GO" id="GO:0046872">
    <property type="term" value="F:metal ion binding"/>
    <property type="evidence" value="ECO:0007669"/>
    <property type="project" value="UniProtKB-KW"/>
</dbReference>
<dbReference type="GO" id="GO:0038187">
    <property type="term" value="F:pattern recognition receptor activity"/>
    <property type="evidence" value="ECO:0000314"/>
    <property type="project" value="UniProtKB"/>
</dbReference>
<dbReference type="GO" id="GO:0002250">
    <property type="term" value="P:adaptive immune response"/>
    <property type="evidence" value="ECO:0007669"/>
    <property type="project" value="UniProtKB-KW"/>
</dbReference>
<dbReference type="GO" id="GO:0061760">
    <property type="term" value="P:antifungal innate immune response"/>
    <property type="evidence" value="ECO:0000314"/>
    <property type="project" value="UniProtKB"/>
</dbReference>
<dbReference type="GO" id="GO:0042742">
    <property type="term" value="P:defense response to bacterium"/>
    <property type="evidence" value="ECO:0007669"/>
    <property type="project" value="Ensembl"/>
</dbReference>
<dbReference type="GO" id="GO:0038094">
    <property type="term" value="P:Fc-gamma receptor signaling pathway"/>
    <property type="evidence" value="ECO:0007669"/>
    <property type="project" value="Ensembl"/>
</dbReference>
<dbReference type="GO" id="GO:0043123">
    <property type="term" value="P:positive regulation of canonical NF-kappaB signal transduction"/>
    <property type="evidence" value="ECO:0007669"/>
    <property type="project" value="Ensembl"/>
</dbReference>
<dbReference type="GO" id="GO:0030887">
    <property type="term" value="P:positive regulation of myeloid dendritic cell activation"/>
    <property type="evidence" value="ECO:0000250"/>
    <property type="project" value="UniProtKB"/>
</dbReference>
<dbReference type="GO" id="GO:0002292">
    <property type="term" value="P:T cell differentiation involved in immune response"/>
    <property type="evidence" value="ECO:0007669"/>
    <property type="project" value="Ensembl"/>
</dbReference>
<dbReference type="CDD" id="cd03590">
    <property type="entry name" value="CLECT_DC-SIGN_like"/>
    <property type="match status" value="1"/>
</dbReference>
<dbReference type="FunFam" id="3.10.100.10:FF:000024">
    <property type="entry name" value="C-type lectin domain family 4 member A"/>
    <property type="match status" value="1"/>
</dbReference>
<dbReference type="Gene3D" id="3.10.100.10">
    <property type="entry name" value="Mannose-Binding Protein A, subunit A"/>
    <property type="match status" value="1"/>
</dbReference>
<dbReference type="InterPro" id="IPR001304">
    <property type="entry name" value="C-type_lectin-like"/>
</dbReference>
<dbReference type="InterPro" id="IPR016186">
    <property type="entry name" value="C-type_lectin-like/link_sf"/>
</dbReference>
<dbReference type="InterPro" id="IPR050111">
    <property type="entry name" value="C-type_lectin/snaclec_domain"/>
</dbReference>
<dbReference type="InterPro" id="IPR033989">
    <property type="entry name" value="CD209-like_CTLD"/>
</dbReference>
<dbReference type="InterPro" id="IPR016187">
    <property type="entry name" value="CTDL_fold"/>
</dbReference>
<dbReference type="PANTHER" id="PTHR22803">
    <property type="entry name" value="MANNOSE, PHOSPHOLIPASE, LECTIN RECEPTOR RELATED"/>
    <property type="match status" value="1"/>
</dbReference>
<dbReference type="Pfam" id="PF00059">
    <property type="entry name" value="Lectin_C"/>
    <property type="match status" value="1"/>
</dbReference>
<dbReference type="SMART" id="SM00034">
    <property type="entry name" value="CLECT"/>
    <property type="match status" value="1"/>
</dbReference>
<dbReference type="SUPFAM" id="SSF56436">
    <property type="entry name" value="C-type lectin-like"/>
    <property type="match status" value="1"/>
</dbReference>
<dbReference type="PROSITE" id="PS50041">
    <property type="entry name" value="C_TYPE_LECTIN_2"/>
    <property type="match status" value="1"/>
</dbReference>
<sequence length="215" mass="24704">MGLEKPQSKLEGGMHPQLIPSVIAVVFILLLSVCFIASCLVTHHNFSRCKRGTGVHKLEHHAKLKCIKEKSELKSAEGSTWNCCPIDWRAFQSNCYFPLTDNKTWAESERNCSGMGAHLMTISTEAEQNFIIQFLDRRLSYFLGLRDENAKGQWRWVDQTPFNPRRVFWHKNEPDNSQGENCVVLVYNQDKWAWNDVPCNFEASRICKIPGTTLN</sequence>
<comment type="function">
    <text evidence="1 4 5 6">Calcium-dependent lectin that acts as a pattern recognition receptor (PRR) of the innate immune system: recognizes damage-associated molecular patterns (DAMPs) of pathogen-associated molecular patterns (PAMPs) of bacteria and fungi (PubMed:23602766, PubMed:23911656). The PAMPs include alpha-mannans on C.albicans hypheas and mycobacterial trehalose 6,6'-dimycolate (TDM) (PubMed:23602766, PubMed:23911656). Interacts with signaling adapter Fc receptor gamma chain/FCER1G, likely via CLEC4E, to form a functional complex in myeloid cells (By similarity). Binding of mycobacterial TDM or C.albicans alpha-mannans to this receptor complex leads to phosphorylation of the immunoreceptor tyrosine-based activation motif (ITAM) of FCER1G, triggering activation of SYK, CARD9 and NF-kappa-B, consequently driving maturation of antigen-presenting cells and shaping antigen-specific priming of T-cells toward effector T-helper 1 and T-helper 17 cell subtypes (PubMed:23602766, PubMed:23911656). The heterodimer formed with CLEC6A is active against fungal infection (PubMed:23911656). Functions as an endocytic receptor (PubMed:14971047). May be involved in antigen uptake at the site of infection, either for clearance of the antigen, or for processing and further presentation to T-cells (PubMed:14971047).</text>
</comment>
<comment type="subunit">
    <text evidence="1 6">Heterodimer with CLEC4E; disulfide-linked (By similarity). CLEC4E acts as a bridge for interaction between CLEC4D and FCER1G to form a functional complex (By similarity). Heterodimer with CLEC6A; this heterodimer forms a pattern recognition receptor (PRR) against fungal infection (PubMed:23911656).</text>
</comment>
<comment type="interaction">
    <interactant intactId="EBI-12703404">
        <id>Q8WXI8</id>
    </interactant>
    <interactant intactId="EBI-77797">
        <id>P35609</id>
        <label>ACTN2</label>
    </interactant>
    <organismsDiffer>false</organismsDiffer>
    <experiments>3</experiments>
</comment>
<comment type="interaction">
    <interactant intactId="EBI-12703404">
        <id>Q8WXI8</id>
    </interactant>
    <interactant intactId="EBI-12109402">
        <id>Q86W74-2</id>
        <label>ANKRD46</label>
    </interactant>
    <organismsDiffer>false</organismsDiffer>
    <experiments>3</experiments>
</comment>
<comment type="interaction">
    <interactant intactId="EBI-12703404">
        <id>Q8WXI8</id>
    </interactant>
    <interactant intactId="EBI-10266796">
        <id>Q8N5M9</id>
        <label>JAGN1</label>
    </interactant>
    <organismsDiffer>false</organismsDiffer>
    <experiments>3</experiments>
</comment>
<comment type="interaction">
    <interactant intactId="EBI-12703404">
        <id>Q8WXI8</id>
    </interactant>
    <interactant intactId="EBI-10268111">
        <id>Q8N966</id>
        <label>ZDHHC22</label>
    </interactant>
    <organismsDiffer>false</organismsDiffer>
    <experiments>3</experiments>
</comment>
<comment type="subcellular location">
    <subcellularLocation>
        <location evidence="6">Cell membrane</location>
        <topology evidence="14">Single-pass type II membrane protein</topology>
    </subcellularLocation>
</comment>
<comment type="tissue specificity">
    <text evidence="4">Expressed weakly in peripheral blood leukocytes, bone marrow and spleen. Expression is confined mostly in monocytes and macrophage and seems to be up-regulated by IL-6, IL-10, TNF-alpha and IFN-gamma.</text>
</comment>
<comment type="induction">
    <text evidence="4">By autocrine inflammatory stimuli.</text>
</comment>
<comment type="online information" name="Functional Glycomics Gateway - Glycan Binding">
    <link uri="http://www.functionalglycomics.org/glycomics/GBPServlet?&amp;operationType=view&amp;cbpId=cbp_hum_Ctlect_365"/>
    <text>MCL</text>
</comment>